<comment type="function">
    <text>Cell wall lytic enzyme. Hydrolyzes the link between L-alanine and D-glutamate residues in certain bacterial cell-wall glycopeptides.</text>
</comment>
<comment type="subcellular location">
    <subcellularLocation>
        <location>Secreted</location>
    </subcellularLocation>
</comment>
<comment type="developmental stage">
    <text>Expressed at about 20 minutes after infection.</text>
</comment>
<comment type="similarity">
    <text evidence="1">Belongs to the peptidase M15C family.</text>
</comment>
<dbReference type="EC" id="3.4.24.-"/>
<dbReference type="EMBL" id="X85008">
    <property type="protein sequence ID" value="CAA59362.1"/>
    <property type="molecule type" value="Genomic_DNA"/>
</dbReference>
<dbReference type="EMBL" id="AJ242593">
    <property type="protein sequence ID" value="CAB53811.1"/>
    <property type="molecule type" value="Genomic_DNA"/>
</dbReference>
<dbReference type="PIR" id="S69799">
    <property type="entry name" value="S69799"/>
</dbReference>
<dbReference type="RefSeq" id="NP_463486.1">
    <property type="nucleotide sequence ID" value="NC_003216.1"/>
</dbReference>
<dbReference type="SMR" id="Q37976"/>
<dbReference type="MEROPS" id="M15.020"/>
<dbReference type="GeneID" id="922391"/>
<dbReference type="KEGG" id="vg:922391"/>
<dbReference type="OrthoDB" id="12686at10239"/>
<dbReference type="Proteomes" id="UP000002666">
    <property type="component" value="Genome"/>
</dbReference>
<dbReference type="GO" id="GO:0005576">
    <property type="term" value="C:extracellular region"/>
    <property type="evidence" value="ECO:0007669"/>
    <property type="project" value="UniProtKB-SubCell"/>
</dbReference>
<dbReference type="GO" id="GO:0008233">
    <property type="term" value="F:peptidase activity"/>
    <property type="evidence" value="ECO:0007669"/>
    <property type="project" value="InterPro"/>
</dbReference>
<dbReference type="GO" id="GO:0071555">
    <property type="term" value="P:cell wall organization"/>
    <property type="evidence" value="ECO:0007669"/>
    <property type="project" value="UniProtKB-KW"/>
</dbReference>
<dbReference type="CDD" id="cd14845">
    <property type="entry name" value="L-Ala-D-Glu_peptidase_like"/>
    <property type="match status" value="1"/>
</dbReference>
<dbReference type="Gene3D" id="3.30.1380.10">
    <property type="match status" value="1"/>
</dbReference>
<dbReference type="InterPro" id="IPR044081">
    <property type="entry name" value="DUF5776"/>
</dbReference>
<dbReference type="InterPro" id="IPR009045">
    <property type="entry name" value="Hedgehog_sig/DD-Pept_Zn-bd_sf"/>
</dbReference>
<dbReference type="InterPro" id="IPR039561">
    <property type="entry name" value="Peptidase_M15C"/>
</dbReference>
<dbReference type="Pfam" id="PF19087">
    <property type="entry name" value="DUF5776"/>
    <property type="match status" value="1"/>
</dbReference>
<dbReference type="Pfam" id="PF13539">
    <property type="entry name" value="Peptidase_M15_4"/>
    <property type="match status" value="1"/>
</dbReference>
<dbReference type="SUPFAM" id="SSF55166">
    <property type="entry name" value="Hedgehog/DD-peptidase"/>
    <property type="match status" value="1"/>
</dbReference>
<dbReference type="SUPFAM" id="SSF158634">
    <property type="entry name" value="RPA2825-like"/>
    <property type="match status" value="1"/>
</dbReference>
<organism>
    <name type="scientific">Listeria phage A118</name>
    <name type="common">Bacteriophage A118</name>
    <dbReference type="NCBI Taxonomy" id="40521"/>
    <lineage>
        <taxon>Viruses</taxon>
        <taxon>Duplodnaviria</taxon>
        <taxon>Heunggongvirae</taxon>
        <taxon>Uroviricota</taxon>
        <taxon>Caudoviricetes</taxon>
    </lineage>
</organism>
<keyword id="KW-0961">Cell wall biogenesis/degradation</keyword>
<keyword id="KW-0378">Hydrolase</keyword>
<keyword id="KW-1185">Reference proteome</keyword>
<keyword id="KW-0964">Secreted</keyword>
<evidence type="ECO:0000305" key="1"/>
<proteinExistence type="evidence at transcript level"/>
<accession>Q37976</accession>
<accession>Q9T199</accession>
<gene>
    <name type="primary">ply</name>
    <name type="synonym">ply118</name>
</gene>
<name>AEPE_BPA18</name>
<protein>
    <recommendedName>
        <fullName>L-alanyl-D-glutamate peptidase</fullName>
        <ecNumber>3.4.24.-</ecNumber>
    </recommendedName>
</protein>
<sequence length="281" mass="30799">MTSYYYSRSLANVNKLADNTKAAARKLLDWSESNGIEVLIYETIRTKEQQAANVNSGASQTMRSYHLVGQALDFVMAKGKTVDWGAYRSDKGKKFVAKAKSLGFEWGGDWSGFVDNPHLQFNYKGYGTDTFGKGASTSNSSKPSADTNTNSLGLVDYMNLNKLDSSFANRKKLATSYGIKNYSGTATQNTTLLAKLKAGKPHTPASKNTYYTENPRKVKTLVQCDLYKSVDFTTKNQTGGTFPPGTVFTISGMGKTKGGTPRLKTKSGYYLTANTKFVKKI</sequence>
<feature type="chain" id="PRO_0000217835" description="L-alanyl-D-glutamate peptidase">
    <location>
        <begin position="1"/>
        <end position="281"/>
    </location>
</feature>
<feature type="sequence conflict" description="In Ref. 1; CAA59362." evidence="1" ref="1">
    <original>A</original>
    <variation>R</variation>
    <location>
        <position position="24"/>
    </location>
</feature>
<organismHost>
    <name type="scientific">Listeria monocytogenes</name>
    <dbReference type="NCBI Taxonomy" id="1639"/>
</organismHost>
<reference key="1">
    <citation type="journal article" date="1995" name="Mol. Microbiol.">
        <title>Heterogeneous endolysins in Listeria monocytogenes bacteriophages: a new class of enzymes and evidence for conserved holin genes within the siphoviral lysis cassettes.</title>
        <authorList>
            <person name="Loessner M.J."/>
            <person name="Wendlinger G."/>
            <person name="Scherer S."/>
        </authorList>
    </citation>
    <scope>NUCLEOTIDE SEQUENCE [GENOMIC DNA]</scope>
</reference>
<reference key="2">
    <citation type="journal article" date="2000" name="Mol. Microbiol.">
        <title>Complete nucleotide sequence, molecular analysis and genome structure of bacteriophage A118 of Listeria monocytogenes: implications for phage evolution.</title>
        <authorList>
            <person name="Loessner M.J."/>
            <person name="Inman R.B."/>
            <person name="Lauer P."/>
            <person name="Calendar R."/>
        </authorList>
    </citation>
    <scope>NUCLEOTIDE SEQUENCE [LARGE SCALE GENOMIC DNA]</scope>
</reference>